<feature type="signal peptide" evidence="2">
    <location>
        <begin position="1"/>
        <end position="18"/>
    </location>
</feature>
<feature type="chain" id="PRO_0000035885" description="Tyrosinase">
    <location>
        <begin position="19"/>
        <end position="273" status="greater than"/>
    </location>
</feature>
<feature type="binding site" evidence="1">
    <location>
        <position position="180"/>
    </location>
    <ligand>
        <name>Cu cation</name>
        <dbReference type="ChEBI" id="CHEBI:23378"/>
        <label>A</label>
    </ligand>
</feature>
<feature type="binding site" evidence="1">
    <location>
        <position position="202"/>
    </location>
    <ligand>
        <name>Cu cation</name>
        <dbReference type="ChEBI" id="CHEBI:23378"/>
        <label>A</label>
    </ligand>
</feature>
<feature type="binding site" evidence="1">
    <location>
        <position position="211"/>
    </location>
    <ligand>
        <name>Cu cation</name>
        <dbReference type="ChEBI" id="CHEBI:23378"/>
        <label>A</label>
    </ligand>
</feature>
<feature type="glycosylation site" description="N-linked (GlcNAc...) asparagine" evidence="2">
    <location>
        <position position="86"/>
    </location>
</feature>
<feature type="glycosylation site" description="N-linked (GlcNAc...) asparagine" evidence="2">
    <location>
        <position position="169"/>
    </location>
</feature>
<feature type="glycosylation site" description="N-linked (GlcNAc...) asparagine" evidence="2">
    <location>
        <position position="230"/>
    </location>
</feature>
<feature type="non-terminal residue">
    <location>
        <position position="273"/>
    </location>
</feature>
<sequence>MCLLALGFLLGILQPASGQFPRACASSESLLRKECCPLWAGDGSPCGELSGRGSCQEILLSRAPLGPQFPFTGVDDREDWPAVFYNRTCQCNSNFMGFNCGECRFGFSGPNCAERRMRMRRSIFQLSTREKNKFLAYLNLAKHTPSQDYVIATGTYAQMNNGLTPMFRNISVYDLFVWMHYYVSRDTLLGDASVWRDIDFAHEAPGFLPWHRLFLVLWEHEIQKITGDENFTIPYWDWRDAEGCDVCTDELMGDRHPTNPQLLSPASFFSSWQ</sequence>
<gene>
    <name type="primary">TYR</name>
</gene>
<accession>P55026</accession>
<protein>
    <recommendedName>
        <fullName>Tyrosinase</fullName>
        <ecNumber>1.14.18.1</ecNumber>
    </recommendedName>
    <alternativeName>
        <fullName>Monophenol monooxygenase</fullName>
    </alternativeName>
</protein>
<dbReference type="EC" id="1.14.18.1"/>
<dbReference type="EMBL" id="S56789">
    <property type="protein sequence ID" value="AAB25511.1"/>
    <property type="molecule type" value="Genomic_DNA"/>
</dbReference>
<dbReference type="SMR" id="P55026"/>
<dbReference type="STRING" id="13735.ENSPSIP00000019248"/>
<dbReference type="GlyCosmos" id="P55026">
    <property type="glycosylation" value="3 sites, No reported glycans"/>
</dbReference>
<dbReference type="eggNOG" id="ENOG502QRET">
    <property type="taxonomic scope" value="Eukaryota"/>
</dbReference>
<dbReference type="HOGENOM" id="CLU_038693_1_0_1"/>
<dbReference type="Proteomes" id="UP000007267">
    <property type="component" value="Unassembled WGS sequence"/>
</dbReference>
<dbReference type="GO" id="GO:0033162">
    <property type="term" value="C:melanosome membrane"/>
    <property type="evidence" value="ECO:0007669"/>
    <property type="project" value="UniProtKB-SubCell"/>
</dbReference>
<dbReference type="GO" id="GO:0046872">
    <property type="term" value="F:metal ion binding"/>
    <property type="evidence" value="ECO:0007669"/>
    <property type="project" value="UniProtKB-KW"/>
</dbReference>
<dbReference type="GO" id="GO:0004503">
    <property type="term" value="F:tyrosinase activity"/>
    <property type="evidence" value="ECO:0007669"/>
    <property type="project" value="UniProtKB-EC"/>
</dbReference>
<dbReference type="GO" id="GO:0042438">
    <property type="term" value="P:melanin biosynthetic process"/>
    <property type="evidence" value="ECO:0007669"/>
    <property type="project" value="UniProtKB-KW"/>
</dbReference>
<dbReference type="GO" id="GO:0043473">
    <property type="term" value="P:pigmentation"/>
    <property type="evidence" value="ECO:0007669"/>
    <property type="project" value="TreeGrafter"/>
</dbReference>
<dbReference type="Gene3D" id="1.10.1280.10">
    <property type="entry name" value="Di-copper center containing domain from catechol oxidase"/>
    <property type="match status" value="1"/>
</dbReference>
<dbReference type="InterPro" id="IPR008922">
    <property type="entry name" value="Di-copper_centre_dom_sf"/>
</dbReference>
<dbReference type="InterPro" id="IPR050316">
    <property type="entry name" value="Tyrosinase/Hemocyanin"/>
</dbReference>
<dbReference type="InterPro" id="IPR002227">
    <property type="entry name" value="Tyrosinase_Cu-bd"/>
</dbReference>
<dbReference type="PANTHER" id="PTHR11474:SF124">
    <property type="entry name" value="TYROSINASE"/>
    <property type="match status" value="1"/>
</dbReference>
<dbReference type="PANTHER" id="PTHR11474">
    <property type="entry name" value="TYROSINASE FAMILY MEMBER"/>
    <property type="match status" value="1"/>
</dbReference>
<dbReference type="Pfam" id="PF00264">
    <property type="entry name" value="Tyrosinase"/>
    <property type="match status" value="1"/>
</dbReference>
<dbReference type="PRINTS" id="PR00092">
    <property type="entry name" value="TYROSINASE"/>
</dbReference>
<dbReference type="SUPFAM" id="SSF48056">
    <property type="entry name" value="Di-copper centre-containing domain"/>
    <property type="match status" value="1"/>
</dbReference>
<dbReference type="PROSITE" id="PS00497">
    <property type="entry name" value="TYROSINASE_1"/>
    <property type="match status" value="1"/>
</dbReference>
<name>TYRO_PELSI</name>
<evidence type="ECO:0000250" key="1">
    <source>
        <dbReference type="UniProtKB" id="Q9ZP19"/>
    </source>
</evidence>
<evidence type="ECO:0000255" key="2"/>
<evidence type="ECO:0000305" key="3"/>
<keyword id="KW-0186">Copper</keyword>
<keyword id="KW-0325">Glycoprotein</keyword>
<keyword id="KW-0470">Melanin biosynthesis</keyword>
<keyword id="KW-0472">Membrane</keyword>
<keyword id="KW-0479">Metal-binding</keyword>
<keyword id="KW-0503">Monooxygenase</keyword>
<keyword id="KW-0560">Oxidoreductase</keyword>
<keyword id="KW-1185">Reference proteome</keyword>
<keyword id="KW-0732">Signal</keyword>
<keyword id="KW-0812">Transmembrane</keyword>
<proteinExistence type="inferred from homology"/>
<comment type="function">
    <text>This is a copper-containing oxidase that functions in the formation of pigments such as melanins and other polyphenolic compounds.</text>
</comment>
<comment type="catalytic activity">
    <reaction>
        <text>2 L-dopa + O2 = 2 L-dopaquinone + 2 H2O</text>
        <dbReference type="Rhea" id="RHEA:34287"/>
        <dbReference type="ChEBI" id="CHEBI:15377"/>
        <dbReference type="ChEBI" id="CHEBI:15379"/>
        <dbReference type="ChEBI" id="CHEBI:57504"/>
        <dbReference type="ChEBI" id="CHEBI:57924"/>
        <dbReference type="EC" id="1.14.18.1"/>
    </reaction>
</comment>
<comment type="catalytic activity">
    <reaction>
        <text>L-tyrosine + O2 = L-dopaquinone + H2O</text>
        <dbReference type="Rhea" id="RHEA:18117"/>
        <dbReference type="ChEBI" id="CHEBI:15377"/>
        <dbReference type="ChEBI" id="CHEBI:15379"/>
        <dbReference type="ChEBI" id="CHEBI:57924"/>
        <dbReference type="ChEBI" id="CHEBI:58315"/>
        <dbReference type="EC" id="1.14.18.1"/>
    </reaction>
</comment>
<comment type="cofactor">
    <cofactor evidence="1">
        <name>Cu(2+)</name>
        <dbReference type="ChEBI" id="CHEBI:29036"/>
    </cofactor>
    <text evidence="1">Binds 2 copper ions per subunit.</text>
</comment>
<comment type="subcellular location">
    <subcellularLocation>
        <location>Melanosome membrane</location>
        <topology>Single-pass type I membrane protein</topology>
    </subcellularLocation>
</comment>
<comment type="similarity">
    <text evidence="3">Belongs to the tyrosinase family.</text>
</comment>
<reference key="1">
    <citation type="journal article" date="1992" name="Pigment Cell Res.">
        <title>Phylogeny of regulatory regions of vertebrate tyrosinase genes.</title>
        <authorList>
            <person name="Yamamoto H."/>
            <person name="Kudo T."/>
            <person name="Masuko N."/>
            <person name="Miura H."/>
            <person name="Sato S."/>
            <person name="Tanaka M."/>
            <person name="Tanaka S."/>
            <person name="Takeuchi S."/>
            <person name="Shibahara S."/>
            <person name="Takeuchi T."/>
        </authorList>
    </citation>
    <scope>NUCLEOTIDE SEQUENCE [GENOMIC DNA]</scope>
    <source>
        <strain>Ssp. Japonicus</strain>
        <tissue>Testis</tissue>
    </source>
</reference>
<organism>
    <name type="scientific">Pelodiscus sinensis</name>
    <name type="common">Chinese softshell turtle</name>
    <name type="synonym">Trionyx sinensis</name>
    <dbReference type="NCBI Taxonomy" id="13735"/>
    <lineage>
        <taxon>Eukaryota</taxon>
        <taxon>Metazoa</taxon>
        <taxon>Chordata</taxon>
        <taxon>Craniata</taxon>
        <taxon>Vertebrata</taxon>
        <taxon>Euteleostomi</taxon>
        <taxon>Archelosauria</taxon>
        <taxon>Testudinata</taxon>
        <taxon>Testudines</taxon>
        <taxon>Cryptodira</taxon>
        <taxon>Trionychia</taxon>
        <taxon>Trionychidae</taxon>
        <taxon>Pelodiscus</taxon>
    </lineage>
</organism>